<accession>D3ZZW6</accession>
<sequence length="169" mass="18617">MSLVSPSPDSNAVMAGDQDASTSQVPSQSESKIGPNVATQTLRKPTMSKVILRTVADKGVHSRVSLAALKKAVSITGYNMAQNTWRFKRVLQNLVKKGMLKQVTGKGASGSFRLGKKQAFKSKCKAKRRQRRQKPGQRRTGSRRSLLGSKKSNNRLFKGVRRVAKGRRH</sequence>
<organism>
    <name type="scientific">Rattus norvegicus</name>
    <name type="common">Rat</name>
    <dbReference type="NCBI Taxonomy" id="10116"/>
    <lineage>
        <taxon>Eukaryota</taxon>
        <taxon>Metazoa</taxon>
        <taxon>Chordata</taxon>
        <taxon>Craniata</taxon>
        <taxon>Vertebrata</taxon>
        <taxon>Euteleostomi</taxon>
        <taxon>Mammalia</taxon>
        <taxon>Eutheria</taxon>
        <taxon>Euarchontoglires</taxon>
        <taxon>Glires</taxon>
        <taxon>Rodentia</taxon>
        <taxon>Myomorpha</taxon>
        <taxon>Muroidea</taxon>
        <taxon>Muridae</taxon>
        <taxon>Murinae</taxon>
        <taxon>Rattus</taxon>
    </lineage>
</organism>
<dbReference type="EMBL" id="CH473948">
    <property type="protein sequence ID" value="EDM05730.1"/>
    <property type="molecule type" value="Genomic_DNA"/>
</dbReference>
<dbReference type="RefSeq" id="NP_001103035.1">
    <property type="nucleotide sequence ID" value="NM_001109565.1"/>
</dbReference>
<dbReference type="SMR" id="D3ZZW6"/>
<dbReference type="FunCoup" id="D3ZZW6">
    <property type="interactions" value="9"/>
</dbReference>
<dbReference type="STRING" id="10116.ENSRNOP00000037497"/>
<dbReference type="iPTMnet" id="D3ZZW6"/>
<dbReference type="PhosphoSitePlus" id="D3ZZW6"/>
<dbReference type="PaxDb" id="10116-ENSRNOP00000037497"/>
<dbReference type="Ensembl" id="ENSRNOT00000030737.5">
    <property type="protein sequence ID" value="ENSRNOP00000037497.4"/>
    <property type="gene ID" value="ENSRNOG00000024041.5"/>
</dbReference>
<dbReference type="GeneID" id="690026"/>
<dbReference type="KEGG" id="rno:690026"/>
<dbReference type="UCSC" id="RGD:1585185">
    <property type="organism name" value="rat"/>
</dbReference>
<dbReference type="AGR" id="RGD:1585185"/>
<dbReference type="CTD" id="690026"/>
<dbReference type="RGD" id="1585185">
    <property type="gene designation" value="Hils1"/>
</dbReference>
<dbReference type="eggNOG" id="ENOG502SVZZ">
    <property type="taxonomic scope" value="Eukaryota"/>
</dbReference>
<dbReference type="GeneTree" id="ENSGT00730000111487"/>
<dbReference type="HOGENOM" id="CLU_105276_0_0_1"/>
<dbReference type="InParanoid" id="D3ZZW6"/>
<dbReference type="OMA" id="NMTRNAW"/>
<dbReference type="OrthoDB" id="10070184at2759"/>
<dbReference type="PhylomeDB" id="D3ZZW6"/>
<dbReference type="TreeFam" id="TF337069"/>
<dbReference type="PRO" id="PR:D3ZZW6"/>
<dbReference type="Proteomes" id="UP000002494">
    <property type="component" value="Chromosome 10"/>
</dbReference>
<dbReference type="Proteomes" id="UP000234681">
    <property type="component" value="Chromosome 10"/>
</dbReference>
<dbReference type="Bgee" id="ENSRNOG00000024041">
    <property type="expression patterns" value="Expressed in testis and 7 other cell types or tissues"/>
</dbReference>
<dbReference type="GO" id="GO:0001673">
    <property type="term" value="C:male germ cell nucleus"/>
    <property type="evidence" value="ECO:0000266"/>
    <property type="project" value="RGD"/>
</dbReference>
<dbReference type="GO" id="GO:0000786">
    <property type="term" value="C:nucleosome"/>
    <property type="evidence" value="ECO:0000266"/>
    <property type="project" value="RGD"/>
</dbReference>
<dbReference type="GO" id="GO:0005634">
    <property type="term" value="C:nucleus"/>
    <property type="evidence" value="ECO:0000318"/>
    <property type="project" value="GO_Central"/>
</dbReference>
<dbReference type="GO" id="GO:0003690">
    <property type="term" value="F:double-stranded DNA binding"/>
    <property type="evidence" value="ECO:0000318"/>
    <property type="project" value="GO_Central"/>
</dbReference>
<dbReference type="GO" id="GO:0042393">
    <property type="term" value="F:histone binding"/>
    <property type="evidence" value="ECO:0000266"/>
    <property type="project" value="RGD"/>
</dbReference>
<dbReference type="GO" id="GO:0003676">
    <property type="term" value="F:nucleic acid binding"/>
    <property type="evidence" value="ECO:0000266"/>
    <property type="project" value="RGD"/>
</dbReference>
<dbReference type="GO" id="GO:0031492">
    <property type="term" value="F:nucleosomal DNA binding"/>
    <property type="evidence" value="ECO:0000318"/>
    <property type="project" value="GO_Central"/>
</dbReference>
<dbReference type="GO" id="GO:0030261">
    <property type="term" value="P:chromosome condensation"/>
    <property type="evidence" value="ECO:0000266"/>
    <property type="project" value="RGD"/>
</dbReference>
<dbReference type="GO" id="GO:0007281">
    <property type="term" value="P:germ cell development"/>
    <property type="evidence" value="ECO:0000266"/>
    <property type="project" value="RGD"/>
</dbReference>
<dbReference type="GO" id="GO:0031507">
    <property type="term" value="P:heterochromatin formation"/>
    <property type="evidence" value="ECO:0000266"/>
    <property type="project" value="RGD"/>
</dbReference>
<dbReference type="GO" id="GO:0045910">
    <property type="term" value="P:negative regulation of DNA recombination"/>
    <property type="evidence" value="ECO:0000318"/>
    <property type="project" value="GO_Central"/>
</dbReference>
<dbReference type="GO" id="GO:0006334">
    <property type="term" value="P:nucleosome assembly"/>
    <property type="evidence" value="ECO:0007669"/>
    <property type="project" value="InterPro"/>
</dbReference>
<dbReference type="GO" id="GO:0007283">
    <property type="term" value="P:spermatogenesis"/>
    <property type="evidence" value="ECO:0000266"/>
    <property type="project" value="RGD"/>
</dbReference>
<dbReference type="FunFam" id="1.10.10.10:FF:000724">
    <property type="entry name" value="Histone H1-like protein in spermatids 1"/>
    <property type="match status" value="1"/>
</dbReference>
<dbReference type="Gene3D" id="1.10.10.10">
    <property type="entry name" value="Winged helix-like DNA-binding domain superfamily/Winged helix DNA-binding domain"/>
    <property type="match status" value="1"/>
</dbReference>
<dbReference type="InterPro" id="IPR005818">
    <property type="entry name" value="Histone_H1/H5_H15"/>
</dbReference>
<dbReference type="InterPro" id="IPR036388">
    <property type="entry name" value="WH-like_DNA-bd_sf"/>
</dbReference>
<dbReference type="InterPro" id="IPR036390">
    <property type="entry name" value="WH_DNA-bd_sf"/>
</dbReference>
<dbReference type="Pfam" id="PF00538">
    <property type="entry name" value="Linker_histone"/>
    <property type="match status" value="1"/>
</dbReference>
<dbReference type="SMART" id="SM00526">
    <property type="entry name" value="H15"/>
    <property type="match status" value="1"/>
</dbReference>
<dbReference type="SUPFAM" id="SSF46785">
    <property type="entry name" value="Winged helix' DNA-binding domain"/>
    <property type="match status" value="1"/>
</dbReference>
<dbReference type="PROSITE" id="PS51504">
    <property type="entry name" value="H15"/>
    <property type="match status" value="1"/>
</dbReference>
<proteinExistence type="evidence at protein level"/>
<evidence type="ECO:0000250" key="1">
    <source>
        <dbReference type="UniProtKB" id="P60008"/>
    </source>
</evidence>
<evidence type="ECO:0000250" key="2">
    <source>
        <dbReference type="UniProtKB" id="Q9QYL0"/>
    </source>
</evidence>
<evidence type="ECO:0000255" key="3">
    <source>
        <dbReference type="PROSITE-ProRule" id="PRU00837"/>
    </source>
</evidence>
<evidence type="ECO:0000256" key="4">
    <source>
        <dbReference type="SAM" id="MobiDB-lite"/>
    </source>
</evidence>
<evidence type="ECO:0000305" key="5"/>
<evidence type="ECO:0000312" key="6">
    <source>
        <dbReference type="RGD" id="1585185"/>
    </source>
</evidence>
<evidence type="ECO:0007744" key="7">
    <source>
    </source>
</evidence>
<comment type="function">
    <text evidence="2">DNA-binding protein that may be implicated in chromatin remodeling and/or transcriptional regulation during spermiogenesis, the process of spermatid maturation into spermatozoa.</text>
</comment>
<comment type="subcellular location">
    <subcellularLocation>
        <location evidence="3">Nucleus</location>
    </subcellularLocation>
    <subcellularLocation>
        <location evidence="3">Chromosome</location>
    </subcellularLocation>
</comment>
<comment type="similarity">
    <text evidence="3">Belongs to the histone H1/H5 family.</text>
</comment>
<keyword id="KW-0156">Chromatin regulator</keyword>
<keyword id="KW-0158">Chromosome</keyword>
<keyword id="KW-0217">Developmental protein</keyword>
<keyword id="KW-0221">Differentiation</keyword>
<keyword id="KW-0238">DNA-binding</keyword>
<keyword id="KW-0539">Nucleus</keyword>
<keyword id="KW-0597">Phosphoprotein</keyword>
<keyword id="KW-1185">Reference proteome</keyword>
<keyword id="KW-0744">Spermatogenesis</keyword>
<keyword id="KW-0804">Transcription</keyword>
<keyword id="KW-0805">Transcription regulation</keyword>
<reference key="1">
    <citation type="journal article" date="2004" name="Nature">
        <title>Genome sequence of the Brown Norway rat yields insights into mammalian evolution.</title>
        <authorList>
            <person name="Gibbs R.A."/>
            <person name="Weinstock G.M."/>
            <person name="Metzker M.L."/>
            <person name="Muzny D.M."/>
            <person name="Sodergren E.J."/>
            <person name="Scherer S."/>
            <person name="Scott G."/>
            <person name="Steffen D."/>
            <person name="Worley K.C."/>
            <person name="Burch P.E."/>
            <person name="Okwuonu G."/>
            <person name="Hines S."/>
            <person name="Lewis L."/>
            <person name="Deramo C."/>
            <person name="Delgado O."/>
            <person name="Dugan-Rocha S."/>
            <person name="Miner G."/>
            <person name="Morgan M."/>
            <person name="Hawes A."/>
            <person name="Gill R."/>
            <person name="Holt R.A."/>
            <person name="Adams M.D."/>
            <person name="Amanatides P.G."/>
            <person name="Baden-Tillson H."/>
            <person name="Barnstead M."/>
            <person name="Chin S."/>
            <person name="Evans C.A."/>
            <person name="Ferriera S."/>
            <person name="Fosler C."/>
            <person name="Glodek A."/>
            <person name="Gu Z."/>
            <person name="Jennings D."/>
            <person name="Kraft C.L."/>
            <person name="Nguyen T."/>
            <person name="Pfannkoch C.M."/>
            <person name="Sitter C."/>
            <person name="Sutton G.G."/>
            <person name="Venter J.C."/>
            <person name="Woodage T."/>
            <person name="Smith D."/>
            <person name="Lee H.-M."/>
            <person name="Gustafson E."/>
            <person name="Cahill P."/>
            <person name="Kana A."/>
            <person name="Doucette-Stamm L."/>
            <person name="Weinstock K."/>
            <person name="Fechtel K."/>
            <person name="Weiss R.B."/>
            <person name="Dunn D.M."/>
            <person name="Green E.D."/>
            <person name="Blakesley R.W."/>
            <person name="Bouffard G.G."/>
            <person name="De Jong P.J."/>
            <person name="Osoegawa K."/>
            <person name="Zhu B."/>
            <person name="Marra M."/>
            <person name="Schein J."/>
            <person name="Bosdet I."/>
            <person name="Fjell C."/>
            <person name="Jones S."/>
            <person name="Krzywinski M."/>
            <person name="Mathewson C."/>
            <person name="Siddiqui A."/>
            <person name="Wye N."/>
            <person name="McPherson J."/>
            <person name="Zhao S."/>
            <person name="Fraser C.M."/>
            <person name="Shetty J."/>
            <person name="Shatsman S."/>
            <person name="Geer K."/>
            <person name="Chen Y."/>
            <person name="Abramzon S."/>
            <person name="Nierman W.C."/>
            <person name="Havlak P.H."/>
            <person name="Chen R."/>
            <person name="Durbin K.J."/>
            <person name="Egan A."/>
            <person name="Ren Y."/>
            <person name="Song X.-Z."/>
            <person name="Li B."/>
            <person name="Liu Y."/>
            <person name="Qin X."/>
            <person name="Cawley S."/>
            <person name="Cooney A.J."/>
            <person name="D'Souza L.M."/>
            <person name="Martin K."/>
            <person name="Wu J.Q."/>
            <person name="Gonzalez-Garay M.L."/>
            <person name="Jackson A.R."/>
            <person name="Kalafus K.J."/>
            <person name="McLeod M.P."/>
            <person name="Milosavljevic A."/>
            <person name="Virk D."/>
            <person name="Volkov A."/>
            <person name="Wheeler D.A."/>
            <person name="Zhang Z."/>
            <person name="Bailey J.A."/>
            <person name="Eichler E.E."/>
            <person name="Tuzun E."/>
            <person name="Birney E."/>
            <person name="Mongin E."/>
            <person name="Ureta-Vidal A."/>
            <person name="Woodwark C."/>
            <person name="Zdobnov E."/>
            <person name="Bork P."/>
            <person name="Suyama M."/>
            <person name="Torrents D."/>
            <person name="Alexandersson M."/>
            <person name="Trask B.J."/>
            <person name="Young J.M."/>
            <person name="Huang H."/>
            <person name="Wang H."/>
            <person name="Xing H."/>
            <person name="Daniels S."/>
            <person name="Gietzen D."/>
            <person name="Schmidt J."/>
            <person name="Stevens K."/>
            <person name="Vitt U."/>
            <person name="Wingrove J."/>
            <person name="Camara F."/>
            <person name="Mar Alba M."/>
            <person name="Abril J.F."/>
            <person name="Guigo R."/>
            <person name="Smit A."/>
            <person name="Dubchak I."/>
            <person name="Rubin E.M."/>
            <person name="Couronne O."/>
            <person name="Poliakov A."/>
            <person name="Huebner N."/>
            <person name="Ganten D."/>
            <person name="Goesele C."/>
            <person name="Hummel O."/>
            <person name="Kreitler T."/>
            <person name="Lee Y.-A."/>
            <person name="Monti J."/>
            <person name="Schulz H."/>
            <person name="Zimdahl H."/>
            <person name="Himmelbauer H."/>
            <person name="Lehrach H."/>
            <person name="Jacob H.J."/>
            <person name="Bromberg S."/>
            <person name="Gullings-Handley J."/>
            <person name="Jensen-Seaman M.I."/>
            <person name="Kwitek A.E."/>
            <person name="Lazar J."/>
            <person name="Pasko D."/>
            <person name="Tonellato P.J."/>
            <person name="Twigger S."/>
            <person name="Ponting C.P."/>
            <person name="Duarte J.M."/>
            <person name="Rice S."/>
            <person name="Goodstadt L."/>
            <person name="Beatson S.A."/>
            <person name="Emes R.D."/>
            <person name="Winter E.E."/>
            <person name="Webber C."/>
            <person name="Brandt P."/>
            <person name="Nyakatura G."/>
            <person name="Adetobi M."/>
            <person name="Chiaromonte F."/>
            <person name="Elnitski L."/>
            <person name="Eswara P."/>
            <person name="Hardison R.C."/>
            <person name="Hou M."/>
            <person name="Kolbe D."/>
            <person name="Makova K."/>
            <person name="Miller W."/>
            <person name="Nekrutenko A."/>
            <person name="Riemer C."/>
            <person name="Schwartz S."/>
            <person name="Taylor J."/>
            <person name="Yang S."/>
            <person name="Zhang Y."/>
            <person name="Lindpaintner K."/>
            <person name="Andrews T.D."/>
            <person name="Caccamo M."/>
            <person name="Clamp M."/>
            <person name="Clarke L."/>
            <person name="Curwen V."/>
            <person name="Durbin R.M."/>
            <person name="Eyras E."/>
            <person name="Searle S.M."/>
            <person name="Cooper G.M."/>
            <person name="Batzoglou S."/>
            <person name="Brudno M."/>
            <person name="Sidow A."/>
            <person name="Stone E.A."/>
            <person name="Payseur B.A."/>
            <person name="Bourque G."/>
            <person name="Lopez-Otin C."/>
            <person name="Puente X.S."/>
            <person name="Chakrabarti K."/>
            <person name="Chatterji S."/>
            <person name="Dewey C."/>
            <person name="Pachter L."/>
            <person name="Bray N."/>
            <person name="Yap V.B."/>
            <person name="Caspi A."/>
            <person name="Tesler G."/>
            <person name="Pevzner P.A."/>
            <person name="Haussler D."/>
            <person name="Roskin K.M."/>
            <person name="Baertsch R."/>
            <person name="Clawson H."/>
            <person name="Furey T.S."/>
            <person name="Hinrichs A.S."/>
            <person name="Karolchik D."/>
            <person name="Kent W.J."/>
            <person name="Rosenbloom K.R."/>
            <person name="Trumbower H."/>
            <person name="Weirauch M."/>
            <person name="Cooper D.N."/>
            <person name="Stenson P.D."/>
            <person name="Ma B."/>
            <person name="Brent M."/>
            <person name="Arumugam M."/>
            <person name="Shteynberg D."/>
            <person name="Copley R.R."/>
            <person name="Taylor M.S."/>
            <person name="Riethman H."/>
            <person name="Mudunuri U."/>
            <person name="Peterson J."/>
            <person name="Guyer M."/>
            <person name="Felsenfeld A."/>
            <person name="Old S."/>
            <person name="Mockrin S."/>
            <person name="Collins F.S."/>
        </authorList>
    </citation>
    <scope>NUCLEOTIDE SEQUENCE [LARGE SCALE GENOMIC DNA]</scope>
    <source>
        <strain>Brown Norway</strain>
    </source>
</reference>
<reference key="2">
    <citation type="journal article" date="2012" name="Nat. Commun.">
        <title>Quantitative maps of protein phosphorylation sites across 14 different rat organs and tissues.</title>
        <authorList>
            <person name="Lundby A."/>
            <person name="Secher A."/>
            <person name="Lage K."/>
            <person name="Nordsborg N.B."/>
            <person name="Dmytriyev A."/>
            <person name="Lundby C."/>
            <person name="Olsen J.V."/>
        </authorList>
    </citation>
    <scope>PHOSPHORYLATION [LARGE SCALE ANALYSIS] AT SER-62 AND SER-65</scope>
    <scope>IDENTIFICATION BY MASS SPECTROMETRY [LARGE SCALE ANALYSIS]</scope>
</reference>
<feature type="chain" id="PRO_0000420823" description="Histone H1.9">
    <location>
        <begin position="1"/>
        <end position="169"/>
    </location>
</feature>
<feature type="domain" description="H15" evidence="3">
    <location>
        <begin position="43"/>
        <end position="116"/>
    </location>
</feature>
<feature type="region of interest" description="Disordered" evidence="4">
    <location>
        <begin position="1"/>
        <end position="36"/>
    </location>
</feature>
<feature type="region of interest" description="Disordered" evidence="4">
    <location>
        <begin position="118"/>
        <end position="154"/>
    </location>
</feature>
<feature type="compositionally biased region" description="Polar residues" evidence="4">
    <location>
        <begin position="1"/>
        <end position="10"/>
    </location>
</feature>
<feature type="compositionally biased region" description="Polar residues" evidence="4">
    <location>
        <begin position="19"/>
        <end position="36"/>
    </location>
</feature>
<feature type="compositionally biased region" description="Basic residues" evidence="4">
    <location>
        <begin position="118"/>
        <end position="142"/>
    </location>
</feature>
<feature type="modified residue" description="Phosphoserine" evidence="7">
    <location>
        <position position="62"/>
    </location>
</feature>
<feature type="modified residue" description="Phosphoserine" evidence="7">
    <location>
        <position position="65"/>
    </location>
</feature>
<name>HILS1_RAT</name>
<gene>
    <name evidence="5" type="primary">H1-9</name>
    <name evidence="1" type="synonym">H1-9p</name>
    <name evidence="2" type="synonym">H1f9</name>
    <name evidence="6" type="synonym">Hils1</name>
</gene>
<protein>
    <recommendedName>
        <fullName evidence="5">Histone H1.9</fullName>
    </recommendedName>
    <alternativeName>
        <fullName evidence="5">Spermatid-specific linker histone H1-like protein</fullName>
    </alternativeName>
</protein>